<reference key="1">
    <citation type="journal article" date="2008" name="Foodborne Pathog. Dis.">
        <title>The complete genome sequence and analysis of the human pathogen Campylobacter lari.</title>
        <authorList>
            <person name="Miller W.G."/>
            <person name="Wang G."/>
            <person name="Binnewies T.T."/>
            <person name="Parker C.T."/>
        </authorList>
    </citation>
    <scope>NUCLEOTIDE SEQUENCE [LARGE SCALE GENOMIC DNA]</scope>
    <source>
        <strain>RM2100 / D67 / ATCC BAA-1060</strain>
    </source>
</reference>
<accession>B9KCX7</accession>
<dbReference type="EMBL" id="CP000932">
    <property type="protein sequence ID" value="ACM64416.1"/>
    <property type="molecule type" value="Genomic_DNA"/>
</dbReference>
<dbReference type="RefSeq" id="WP_012661799.1">
    <property type="nucleotide sequence ID" value="NC_012039.1"/>
</dbReference>
<dbReference type="SMR" id="B9KCX7"/>
<dbReference type="STRING" id="306263.Cla_1094"/>
<dbReference type="GeneID" id="56586860"/>
<dbReference type="KEGG" id="cla:CLA_1094"/>
<dbReference type="eggNOG" id="COG0052">
    <property type="taxonomic scope" value="Bacteria"/>
</dbReference>
<dbReference type="HOGENOM" id="CLU_040318_1_2_7"/>
<dbReference type="Proteomes" id="UP000007727">
    <property type="component" value="Chromosome"/>
</dbReference>
<dbReference type="GO" id="GO:0022627">
    <property type="term" value="C:cytosolic small ribosomal subunit"/>
    <property type="evidence" value="ECO:0007669"/>
    <property type="project" value="TreeGrafter"/>
</dbReference>
<dbReference type="GO" id="GO:0003735">
    <property type="term" value="F:structural constituent of ribosome"/>
    <property type="evidence" value="ECO:0007669"/>
    <property type="project" value="InterPro"/>
</dbReference>
<dbReference type="GO" id="GO:0006412">
    <property type="term" value="P:translation"/>
    <property type="evidence" value="ECO:0007669"/>
    <property type="project" value="UniProtKB-UniRule"/>
</dbReference>
<dbReference type="CDD" id="cd01425">
    <property type="entry name" value="RPS2"/>
    <property type="match status" value="1"/>
</dbReference>
<dbReference type="FunFam" id="1.10.287.610:FF:000001">
    <property type="entry name" value="30S ribosomal protein S2"/>
    <property type="match status" value="1"/>
</dbReference>
<dbReference type="Gene3D" id="3.40.50.10490">
    <property type="entry name" value="Glucose-6-phosphate isomerase like protein, domain 1"/>
    <property type="match status" value="1"/>
</dbReference>
<dbReference type="Gene3D" id="1.10.287.610">
    <property type="entry name" value="Helix hairpin bin"/>
    <property type="match status" value="1"/>
</dbReference>
<dbReference type="HAMAP" id="MF_00291_B">
    <property type="entry name" value="Ribosomal_uS2_B"/>
    <property type="match status" value="1"/>
</dbReference>
<dbReference type="InterPro" id="IPR001865">
    <property type="entry name" value="Ribosomal_uS2"/>
</dbReference>
<dbReference type="InterPro" id="IPR005706">
    <property type="entry name" value="Ribosomal_uS2_bac/mit/plastid"/>
</dbReference>
<dbReference type="InterPro" id="IPR018130">
    <property type="entry name" value="Ribosomal_uS2_CS"/>
</dbReference>
<dbReference type="InterPro" id="IPR023591">
    <property type="entry name" value="Ribosomal_uS2_flav_dom_sf"/>
</dbReference>
<dbReference type="NCBIfam" id="TIGR01011">
    <property type="entry name" value="rpsB_bact"/>
    <property type="match status" value="1"/>
</dbReference>
<dbReference type="PANTHER" id="PTHR12534">
    <property type="entry name" value="30S RIBOSOMAL PROTEIN S2 PROKARYOTIC AND ORGANELLAR"/>
    <property type="match status" value="1"/>
</dbReference>
<dbReference type="PANTHER" id="PTHR12534:SF0">
    <property type="entry name" value="SMALL RIBOSOMAL SUBUNIT PROTEIN US2M"/>
    <property type="match status" value="1"/>
</dbReference>
<dbReference type="Pfam" id="PF00318">
    <property type="entry name" value="Ribosomal_S2"/>
    <property type="match status" value="1"/>
</dbReference>
<dbReference type="PRINTS" id="PR00395">
    <property type="entry name" value="RIBOSOMALS2"/>
</dbReference>
<dbReference type="SUPFAM" id="SSF52313">
    <property type="entry name" value="Ribosomal protein S2"/>
    <property type="match status" value="1"/>
</dbReference>
<dbReference type="PROSITE" id="PS00962">
    <property type="entry name" value="RIBOSOMAL_S2_1"/>
    <property type="match status" value="1"/>
</dbReference>
<dbReference type="PROSITE" id="PS00963">
    <property type="entry name" value="RIBOSOMAL_S2_2"/>
    <property type="match status" value="1"/>
</dbReference>
<gene>
    <name evidence="1" type="primary">rpsB</name>
    <name type="ordered locus">Cla_1094</name>
</gene>
<evidence type="ECO:0000255" key="1">
    <source>
        <dbReference type="HAMAP-Rule" id="MF_00291"/>
    </source>
</evidence>
<evidence type="ECO:0000256" key="2">
    <source>
        <dbReference type="SAM" id="MobiDB-lite"/>
    </source>
</evidence>
<evidence type="ECO:0000305" key="3"/>
<protein>
    <recommendedName>
        <fullName evidence="1">Small ribosomal subunit protein uS2</fullName>
    </recommendedName>
    <alternativeName>
        <fullName evidence="3">30S ribosomal protein S2</fullName>
    </alternativeName>
</protein>
<sequence length="261" mass="29952">MVSMRDLLECGVHFGHQTRRWNPKMKKFIFGERKGIYVIDLQKTLRYFRYTYNIVRDAAAEGKTILFVGTKKQAGGAIKEYAEKCGMPYVNHRWLGGMMTNFGTIRQSIRKLEVIEKMEEDGSIKLLTKKEALMLTRKKEKLLAYLGGIRYMKTQPDMIFVIDTVKEKIAVQEANRLKIPVVAPLDTNCDPDLVDFPIPGNDDAIRSVQLFCQEMAEAINEGKALREQDGEANEEQPISEEEKKEVLEEAMSEEDFEGDKE</sequence>
<name>RS2_CAMLR</name>
<comment type="similarity">
    <text evidence="1">Belongs to the universal ribosomal protein uS2 family.</text>
</comment>
<proteinExistence type="inferred from homology"/>
<organism>
    <name type="scientific">Campylobacter lari (strain RM2100 / D67 / ATCC BAA-1060)</name>
    <dbReference type="NCBI Taxonomy" id="306263"/>
    <lineage>
        <taxon>Bacteria</taxon>
        <taxon>Pseudomonadati</taxon>
        <taxon>Campylobacterota</taxon>
        <taxon>Epsilonproteobacteria</taxon>
        <taxon>Campylobacterales</taxon>
        <taxon>Campylobacteraceae</taxon>
        <taxon>Campylobacter</taxon>
    </lineage>
</organism>
<feature type="chain" id="PRO_1000194326" description="Small ribosomal subunit protein uS2">
    <location>
        <begin position="1"/>
        <end position="261"/>
    </location>
</feature>
<feature type="region of interest" description="Disordered" evidence="2">
    <location>
        <begin position="222"/>
        <end position="261"/>
    </location>
</feature>
<feature type="compositionally biased region" description="Acidic residues" evidence="2">
    <location>
        <begin position="230"/>
        <end position="239"/>
    </location>
</feature>
<feature type="compositionally biased region" description="Acidic residues" evidence="2">
    <location>
        <begin position="248"/>
        <end position="261"/>
    </location>
</feature>
<keyword id="KW-1185">Reference proteome</keyword>
<keyword id="KW-0687">Ribonucleoprotein</keyword>
<keyword id="KW-0689">Ribosomal protein</keyword>